<dbReference type="EMBL" id="AB039998">
    <property type="protein sequence ID" value="BAB64849.1"/>
    <property type="molecule type" value="Genomic_DNA"/>
</dbReference>
<dbReference type="EMBL" id="AB237912">
    <property type="protein sequence ID" value="BAE46627.1"/>
    <property type="molecule type" value="Genomic_DNA"/>
</dbReference>
<dbReference type="RefSeq" id="YP_358652.1">
    <property type="nucleotide sequence ID" value="NC_007500.1"/>
</dbReference>
<dbReference type="GeneID" id="3735057"/>
<dbReference type="KEGG" id="nsy:3735057"/>
<dbReference type="OrthoDB" id="21670at4085"/>
<dbReference type="Proteomes" id="UP000189701">
    <property type="component" value="Chloroplast Pltd"/>
</dbReference>
<dbReference type="GO" id="GO:0009507">
    <property type="term" value="C:chloroplast"/>
    <property type="evidence" value="ECO:0007669"/>
    <property type="project" value="UniProtKB-SubCell"/>
</dbReference>
<dbReference type="GO" id="GO:0003723">
    <property type="term" value="F:RNA binding"/>
    <property type="evidence" value="ECO:0007669"/>
    <property type="project" value="UniProtKB-KW"/>
</dbReference>
<dbReference type="GO" id="GO:0006397">
    <property type="term" value="P:mRNA processing"/>
    <property type="evidence" value="ECO:0007669"/>
    <property type="project" value="UniProtKB-KW"/>
</dbReference>
<dbReference type="GO" id="GO:0008380">
    <property type="term" value="P:RNA splicing"/>
    <property type="evidence" value="ECO:0007669"/>
    <property type="project" value="UniProtKB-UniRule"/>
</dbReference>
<dbReference type="GO" id="GO:0008033">
    <property type="term" value="P:tRNA processing"/>
    <property type="evidence" value="ECO:0007669"/>
    <property type="project" value="UniProtKB-KW"/>
</dbReference>
<dbReference type="HAMAP" id="MF_01390">
    <property type="entry name" value="MatK"/>
    <property type="match status" value="1"/>
</dbReference>
<dbReference type="InterPro" id="IPR024937">
    <property type="entry name" value="Domain_X"/>
</dbReference>
<dbReference type="InterPro" id="IPR002866">
    <property type="entry name" value="Maturase_MatK"/>
</dbReference>
<dbReference type="InterPro" id="IPR024942">
    <property type="entry name" value="Maturase_MatK_N"/>
</dbReference>
<dbReference type="PANTHER" id="PTHR34811">
    <property type="entry name" value="MATURASE K"/>
    <property type="match status" value="1"/>
</dbReference>
<dbReference type="PANTHER" id="PTHR34811:SF1">
    <property type="entry name" value="MATURASE K"/>
    <property type="match status" value="1"/>
</dbReference>
<dbReference type="Pfam" id="PF01348">
    <property type="entry name" value="Intron_maturas2"/>
    <property type="match status" value="1"/>
</dbReference>
<dbReference type="Pfam" id="PF01824">
    <property type="entry name" value="MatK_N"/>
    <property type="match status" value="1"/>
</dbReference>
<gene>
    <name evidence="1" type="primary">matK</name>
</gene>
<evidence type="ECO:0000255" key="1">
    <source>
        <dbReference type="HAMAP-Rule" id="MF_01390"/>
    </source>
</evidence>
<feature type="chain" id="PRO_0000143547" description="Maturase K">
    <location>
        <begin position="1"/>
        <end position="509"/>
    </location>
</feature>
<accession>Q76MT0</accession>
<accession>Q3C1G2</accession>
<name>MATK_NICSY</name>
<protein>
    <recommendedName>
        <fullName evidence="1">Maturase K</fullName>
    </recommendedName>
    <alternativeName>
        <fullName evidence="1">Intron maturase</fullName>
    </alternativeName>
</protein>
<proteinExistence type="inferred from homology"/>
<geneLocation type="chloroplast"/>
<sequence>MEEIQRYLQPDRSQQHNFLYPLIFQEYIYALAHDHGLNRNRSILLENPGYNNKLSFLIVKRLITRMYQQNHFLISTNDSNKNSFLGCNKSLYSQMISEGFAFIVEIPFSLRLISSLSSFEGKKIFKSYNLRSIHSTFPFLEDNFSHLNYVLDILIPYPVHLEILVQTLRYWVKDASSLHLLRFFLHEFWNLNSLITSKKPGYSFSKKNQRFFFFLYNSYVYECESTFVFLRNQSSHLRSTSFGALLERIYFYGKIERLVEVFAKDFQVTLWLFKDPFMHYVRYQGKSILASKGTFLLMNKWKFYLVNFWQCHCSLCFHTGRIHINQLSNHSRDFMGYLSSVRLNPSMVRSQMLENSFLINNAIKKFDTLVPIIPLIGSLAKANFCTVLGHPISKPVWSDLSDSDIIDRFGRICRNLFHYYSGSSKKKTLYRIKYILRLSCARTLARKHKSTVRTFLKRSGSELLEEFLTSEEQVLSLTFPRASSSLWGVYRSRIWYLDIFCINDLANYQ</sequence>
<organism>
    <name type="scientific">Nicotiana sylvestris</name>
    <name type="common">Wood tobacco</name>
    <name type="synonym">South American tobacco</name>
    <dbReference type="NCBI Taxonomy" id="4096"/>
    <lineage>
        <taxon>Eukaryota</taxon>
        <taxon>Viridiplantae</taxon>
        <taxon>Streptophyta</taxon>
        <taxon>Embryophyta</taxon>
        <taxon>Tracheophyta</taxon>
        <taxon>Spermatophyta</taxon>
        <taxon>Magnoliopsida</taxon>
        <taxon>eudicotyledons</taxon>
        <taxon>Gunneridae</taxon>
        <taxon>Pentapetalae</taxon>
        <taxon>asterids</taxon>
        <taxon>lamiids</taxon>
        <taxon>Solanales</taxon>
        <taxon>Solanaceae</taxon>
        <taxon>Nicotianoideae</taxon>
        <taxon>Nicotianeae</taxon>
        <taxon>Nicotiana</taxon>
    </lineage>
</organism>
<comment type="function">
    <text evidence="1">Usually encoded in the trnK tRNA gene intron. Probably assists in splicing its own and other chloroplast group II introns.</text>
</comment>
<comment type="subcellular location">
    <subcellularLocation>
        <location>Plastid</location>
        <location>Chloroplast</location>
    </subcellularLocation>
</comment>
<comment type="similarity">
    <text evidence="1">Belongs to the intron maturase 2 family. MatK subfamily.</text>
</comment>
<keyword id="KW-0150">Chloroplast</keyword>
<keyword id="KW-0507">mRNA processing</keyword>
<keyword id="KW-0934">Plastid</keyword>
<keyword id="KW-1185">Reference proteome</keyword>
<keyword id="KW-0694">RNA-binding</keyword>
<keyword id="KW-0819">tRNA processing</keyword>
<reference key="1">
    <citation type="journal article" date="2000" name="Plant Biol.">
        <title>Molecular phylogeny of Nicotiana (Solanaceae) based on the nucleotide sequence of the matK gene.</title>
        <authorList>
            <person name="Aoki S."/>
            <person name="Ito M."/>
        </authorList>
    </citation>
    <scope>NUCLEOTIDE SEQUENCE [GENOMIC DNA]</scope>
</reference>
<reference key="2">
    <citation type="journal article" date="2006" name="Mol. Genet. Genomics">
        <title>The chloroplast genome of Nicotiana sylvestris and Nicotiana tomentosiformis: complete sequencing confirms that the Nicotiana sylvestris progenitor is the maternal genome donor of Nicotiana tabacum.</title>
        <authorList>
            <person name="Yukawa M."/>
            <person name="Tsudzuki T."/>
            <person name="Sugiura M."/>
        </authorList>
    </citation>
    <scope>NUCLEOTIDE SEQUENCE [LARGE SCALE GENOMIC DNA]</scope>
</reference>